<organism>
    <name type="scientific">Endomicrobium trichonymphae</name>
    <dbReference type="NCBI Taxonomy" id="1408204"/>
    <lineage>
        <taxon>Bacteria</taxon>
        <taxon>Pseudomonadati</taxon>
        <taxon>Elusimicrobiota</taxon>
        <taxon>Endomicrobiia</taxon>
        <taxon>Endomicrobiales</taxon>
        <taxon>Endomicrobiaceae</taxon>
        <taxon>Candidatus Endomicrobiellum</taxon>
    </lineage>
</organism>
<reference key="1">
    <citation type="journal article" date="2008" name="Proc. Natl. Acad. Sci. U.S.A.">
        <title>Complete genome of the uncultured termite group 1 bacteria in a single host protist cell.</title>
        <authorList>
            <person name="Hongoh Y."/>
            <person name="Sharma V.K."/>
            <person name="Prakash T."/>
            <person name="Noda S."/>
            <person name="Taylor T.D."/>
            <person name="Kudo T."/>
            <person name="Sakaki Y."/>
            <person name="Toyoda A."/>
            <person name="Hattori M."/>
            <person name="Ohkuma M."/>
        </authorList>
    </citation>
    <scope>NUCLEOTIDE SEQUENCE [LARGE SCALE GENOMIC DNA]</scope>
</reference>
<feature type="chain" id="PRO_1000094357" description="2-C-methyl-D-erythritol 4-phosphate cytidylyltransferase">
    <location>
        <begin position="1"/>
        <end position="219"/>
    </location>
</feature>
<feature type="site" description="Transition state stabilizer" evidence="1">
    <location>
        <position position="15"/>
    </location>
</feature>
<feature type="site" description="Transition state stabilizer" evidence="1">
    <location>
        <position position="22"/>
    </location>
</feature>
<feature type="site" description="Positions MEP for the nucleophilic attack" evidence="1">
    <location>
        <position position="149"/>
    </location>
</feature>
<feature type="site" description="Positions MEP for the nucleophilic attack" evidence="1">
    <location>
        <position position="203"/>
    </location>
</feature>
<proteinExistence type="inferred from homology"/>
<dbReference type="EC" id="2.7.7.60" evidence="1"/>
<dbReference type="EMBL" id="AP009510">
    <property type="protein sequence ID" value="BAG14177.1"/>
    <property type="molecule type" value="Genomic_DNA"/>
</dbReference>
<dbReference type="RefSeq" id="WP_015423698.1">
    <property type="nucleotide sequence ID" value="NC_020419.1"/>
</dbReference>
<dbReference type="SMR" id="B1GYT4"/>
<dbReference type="STRING" id="471821.TGRD_694"/>
<dbReference type="KEGG" id="rsd:TGRD_694"/>
<dbReference type="PATRIC" id="fig|471821.5.peg.1182"/>
<dbReference type="HOGENOM" id="CLU_061281_2_2_0"/>
<dbReference type="UniPathway" id="UPA00056">
    <property type="reaction ID" value="UER00093"/>
</dbReference>
<dbReference type="Proteomes" id="UP000001691">
    <property type="component" value="Chromosome"/>
</dbReference>
<dbReference type="GO" id="GO:0050518">
    <property type="term" value="F:2-C-methyl-D-erythritol 4-phosphate cytidylyltransferase activity"/>
    <property type="evidence" value="ECO:0007669"/>
    <property type="project" value="UniProtKB-UniRule"/>
</dbReference>
<dbReference type="GO" id="GO:0019288">
    <property type="term" value="P:isopentenyl diphosphate biosynthetic process, methylerythritol 4-phosphate pathway"/>
    <property type="evidence" value="ECO:0007669"/>
    <property type="project" value="UniProtKB-UniRule"/>
</dbReference>
<dbReference type="CDD" id="cd02516">
    <property type="entry name" value="CDP-ME_synthetase"/>
    <property type="match status" value="1"/>
</dbReference>
<dbReference type="FunFam" id="3.90.550.10:FF:000003">
    <property type="entry name" value="2-C-methyl-D-erythritol 4-phosphate cytidylyltransferase"/>
    <property type="match status" value="1"/>
</dbReference>
<dbReference type="Gene3D" id="3.90.550.10">
    <property type="entry name" value="Spore Coat Polysaccharide Biosynthesis Protein SpsA, Chain A"/>
    <property type="match status" value="1"/>
</dbReference>
<dbReference type="HAMAP" id="MF_00108">
    <property type="entry name" value="IspD"/>
    <property type="match status" value="1"/>
</dbReference>
<dbReference type="InterPro" id="IPR001228">
    <property type="entry name" value="IspD"/>
</dbReference>
<dbReference type="InterPro" id="IPR034683">
    <property type="entry name" value="IspD/TarI"/>
</dbReference>
<dbReference type="InterPro" id="IPR050088">
    <property type="entry name" value="IspD/TarI_cytidylyltransf_bact"/>
</dbReference>
<dbReference type="InterPro" id="IPR029044">
    <property type="entry name" value="Nucleotide-diphossugar_trans"/>
</dbReference>
<dbReference type="NCBIfam" id="TIGR00453">
    <property type="entry name" value="ispD"/>
    <property type="match status" value="1"/>
</dbReference>
<dbReference type="PANTHER" id="PTHR32125">
    <property type="entry name" value="2-C-METHYL-D-ERYTHRITOL 4-PHOSPHATE CYTIDYLYLTRANSFERASE, CHLOROPLASTIC"/>
    <property type="match status" value="1"/>
</dbReference>
<dbReference type="PANTHER" id="PTHR32125:SF4">
    <property type="entry name" value="2-C-METHYL-D-ERYTHRITOL 4-PHOSPHATE CYTIDYLYLTRANSFERASE, CHLOROPLASTIC"/>
    <property type="match status" value="1"/>
</dbReference>
<dbReference type="Pfam" id="PF01128">
    <property type="entry name" value="IspD"/>
    <property type="match status" value="1"/>
</dbReference>
<dbReference type="SUPFAM" id="SSF53448">
    <property type="entry name" value="Nucleotide-diphospho-sugar transferases"/>
    <property type="match status" value="1"/>
</dbReference>
<protein>
    <recommendedName>
        <fullName evidence="1">2-C-methyl-D-erythritol 4-phosphate cytidylyltransferase</fullName>
        <ecNumber evidence="1">2.7.7.60</ecNumber>
    </recommendedName>
    <alternativeName>
        <fullName evidence="1">4-diphosphocytidyl-2C-methyl-D-erythritol synthase</fullName>
    </alternativeName>
    <alternativeName>
        <fullName evidence="1">MEP cytidylyltransferase</fullName>
        <shortName evidence="1">MCT</shortName>
    </alternativeName>
</protein>
<keyword id="KW-0414">Isoprene biosynthesis</keyword>
<keyword id="KW-0548">Nucleotidyltransferase</keyword>
<keyword id="KW-0808">Transferase</keyword>
<name>ISPD_ENDTX</name>
<gene>
    <name evidence="1" type="primary">ispD</name>
    <name type="ordered locus">TGRD_694</name>
</gene>
<sequence length="219" mass="24065">MKNAAIIAAAGSGKRFGSRVSKQFLNLSGKPVFLWSVEAFASIKSFKQIIVVVPSDMVEFLSLKYKTGFVCATGGNERFDSVKNGLALVGDDIDFIAVHDASRPLISKKDILLVLEKAAKTKVAVAVEKAKDTVKLVSADGYILKTLDRTILRNAQTPQIFKTELLKRAYSRKMSAGTTDDSQLVENLKIKVSAVETKFLNFKITTKQDFELAEKILKS</sequence>
<evidence type="ECO:0000255" key="1">
    <source>
        <dbReference type="HAMAP-Rule" id="MF_00108"/>
    </source>
</evidence>
<accession>B1GYT4</accession>
<comment type="function">
    <text evidence="1">Catalyzes the formation of 4-diphosphocytidyl-2-C-methyl-D-erythritol from CTP and 2-C-methyl-D-erythritol 4-phosphate (MEP).</text>
</comment>
<comment type="catalytic activity">
    <reaction evidence="1">
        <text>2-C-methyl-D-erythritol 4-phosphate + CTP + H(+) = 4-CDP-2-C-methyl-D-erythritol + diphosphate</text>
        <dbReference type="Rhea" id="RHEA:13429"/>
        <dbReference type="ChEBI" id="CHEBI:15378"/>
        <dbReference type="ChEBI" id="CHEBI:33019"/>
        <dbReference type="ChEBI" id="CHEBI:37563"/>
        <dbReference type="ChEBI" id="CHEBI:57823"/>
        <dbReference type="ChEBI" id="CHEBI:58262"/>
        <dbReference type="EC" id="2.7.7.60"/>
    </reaction>
</comment>
<comment type="pathway">
    <text evidence="1">Isoprenoid biosynthesis; isopentenyl diphosphate biosynthesis via DXP pathway; isopentenyl diphosphate from 1-deoxy-D-xylulose 5-phosphate: step 2/6.</text>
</comment>
<comment type="similarity">
    <text evidence="1">Belongs to the IspD/TarI cytidylyltransferase family. IspD subfamily.</text>
</comment>